<sequence>MKPTILTDIDGVCLSWQSGLPYFAQKYNLPLEHILKMIQDEKFISPGKLFNCDEELGVKLIEKYNRSDFIRYLSPYKDALCVINKLKEDYNFVAVTALGDSIDALLNRQFNLNALFPGAFSEVLMCSHDSSKEELFKKAKEKYNVICYIDDLAHHCDHASEILRVPVYWMARGERDNIPKTAQRVYTWNDVENKLFSPKENKESFDSEKAIKDVIEKMIKNDSFPWNTTWRTPGFNPYNPYHPYQTHPFQTWNYIKPGGIEYLYNRPTCGDNIFQGAF</sequence>
<feature type="chain" id="PRO_0000165166" description="Uncharacterized 32.4 kDa protein in Gp30-rIII intergenic region">
    <location>
        <begin position="1"/>
        <end position="278"/>
    </location>
</feature>
<protein>
    <recommendedName>
        <fullName>Uncharacterized 32.4 kDa protein in Gp30-rIII intergenic region</fullName>
    </recommendedName>
    <alternativeName>
        <fullName>URF X</fullName>
    </alternativeName>
</protein>
<accession>P32275</accession>
<reference key="1">
    <citation type="journal article" date="1992" name="DNA Seq.">
        <title>The nucleotide sequence between genes 31 and 30 of bacteriophage T4.</title>
        <authorList>
            <person name="Nivinskas R."/>
            <person name="Zajanckauskaite A."/>
            <person name="Raudonikiene A."/>
            <person name="Viteniene I."/>
        </authorList>
    </citation>
    <scope>NUCLEOTIDE SEQUENCE [GENOMIC DNA]</scope>
</reference>
<reference key="2">
    <citation type="journal article" date="2003" name="Microbiol. Mol. Biol. Rev.">
        <title>Bacteriophage T4 genome.</title>
        <authorList>
            <person name="Miller E.S."/>
            <person name="Kutter E."/>
            <person name="Mosig G."/>
            <person name="Arisaka F."/>
            <person name="Kunisawa T."/>
            <person name="Ruger W."/>
        </authorList>
    </citation>
    <scope>NUCLEOTIDE SEQUENCE [LARGE SCALE GENOMIC DNA]</scope>
</reference>
<reference key="3">
    <citation type="journal article" date="1983" name="Nucleic Acids Res.">
        <title>Primary structure and genetic organization of phage T4 DNA ligase.</title>
        <authorList>
            <person name="Armstrong J."/>
            <person name="Brown R.S."/>
            <person name="Tsugita A."/>
        </authorList>
    </citation>
    <scope>NUCLEOTIDE SEQUENCE [GENOMIC DNA] OF 194-278</scope>
</reference>
<gene>
    <name type="primary">y12F</name>
    <name type="synonym">30.2</name>
</gene>
<name>Y12F_BPT4</name>
<organismHost>
    <name type="scientific">Escherichia coli</name>
    <dbReference type="NCBI Taxonomy" id="562"/>
</organismHost>
<organism>
    <name type="scientific">Enterobacteria phage T4</name>
    <name type="common">Bacteriophage T4</name>
    <dbReference type="NCBI Taxonomy" id="10665"/>
    <lineage>
        <taxon>Viruses</taxon>
        <taxon>Duplodnaviria</taxon>
        <taxon>Heunggongvirae</taxon>
        <taxon>Uroviricota</taxon>
        <taxon>Caudoviricetes</taxon>
        <taxon>Straboviridae</taxon>
        <taxon>Tevenvirinae</taxon>
        <taxon>Tequatrovirus</taxon>
    </lineage>
</organism>
<proteinExistence type="predicted"/>
<keyword id="KW-1185">Reference proteome</keyword>
<dbReference type="EMBL" id="X53848">
    <property type="protein sequence ID" value="CAA37843.1"/>
    <property type="molecule type" value="Genomic_DNA"/>
</dbReference>
<dbReference type="EMBL" id="AF158101">
    <property type="protein sequence ID" value="AAD42442.1"/>
    <property type="molecule type" value="Genomic_DNA"/>
</dbReference>
<dbReference type="EMBL" id="X00039">
    <property type="protein sequence ID" value="CAA24919.1"/>
    <property type="molecule type" value="Genomic_DNA"/>
</dbReference>
<dbReference type="PIR" id="S27149">
    <property type="entry name" value="S27149"/>
</dbReference>
<dbReference type="RefSeq" id="NP_049815.1">
    <property type="nucleotide sequence ID" value="NC_000866.4"/>
</dbReference>
<dbReference type="SMR" id="P32275"/>
<dbReference type="GeneID" id="1258676"/>
<dbReference type="KEGG" id="vg:1258676"/>
<dbReference type="OrthoDB" id="9219at10239"/>
<dbReference type="Proteomes" id="UP000009087">
    <property type="component" value="Segment"/>
</dbReference>
<dbReference type="Gene3D" id="3.40.50.1000">
    <property type="entry name" value="HAD superfamily/HAD-like"/>
    <property type="match status" value="1"/>
</dbReference>
<dbReference type="InterPro" id="IPR036412">
    <property type="entry name" value="HAD-like_sf"/>
</dbReference>
<dbReference type="InterPro" id="IPR023214">
    <property type="entry name" value="HAD_sf"/>
</dbReference>
<dbReference type="SUPFAM" id="SSF56784">
    <property type="entry name" value="HAD-like"/>
    <property type="match status" value="1"/>
</dbReference>